<keyword id="KW-0418">Kinase</keyword>
<keyword id="KW-1185">Reference proteome</keyword>
<keyword id="KW-0808">Transferase</keyword>
<comment type="miscellaneous">
    <text>Encoded by one of the numerous copies of postmeiotic segregation increased 2-like genes scattered in the q11-q22 region of the chromosome 7.</text>
</comment>
<comment type="similarity">
    <text evidence="1">Belongs to the DNA mismatch repair MutL/HexB family.</text>
</comment>
<comment type="caution">
    <text evidence="1">Could be the product of a pseudogene.</text>
</comment>
<feature type="chain" id="PRO_0000311102" description="Putative postmeiotic segregation increased 2-like protein 11">
    <location>
        <begin position="1"/>
        <end position="270"/>
    </location>
</feature>
<evidence type="ECO:0000305" key="1"/>
<dbReference type="EMBL" id="U38980">
    <property type="protein sequence ID" value="AAA97460.1"/>
    <property type="molecule type" value="mRNA"/>
</dbReference>
<dbReference type="SMR" id="Q13670"/>
<dbReference type="IntAct" id="Q13670">
    <property type="interactions" value="5"/>
</dbReference>
<dbReference type="STRING" id="9606.ENSP00000334938"/>
<dbReference type="GlyGen" id="Q13670">
    <property type="glycosylation" value="2 sites, 1 O-linked glycan (1 site)"/>
</dbReference>
<dbReference type="iPTMnet" id="Q13670"/>
<dbReference type="PhosphoSitePlus" id="Q13670"/>
<dbReference type="BioMuta" id="HGNC:9125"/>
<dbReference type="DMDM" id="74706325"/>
<dbReference type="jPOST" id="Q13670"/>
<dbReference type="MassIVE" id="Q13670"/>
<dbReference type="PeptideAtlas" id="Q13670"/>
<dbReference type="ProteomicsDB" id="59651"/>
<dbReference type="Pumba" id="Q13670"/>
<dbReference type="AGR" id="HGNC:9125"/>
<dbReference type="GeneCards" id="PMS2P11"/>
<dbReference type="HGNC" id="HGNC:9125">
    <property type="gene designation" value="PMS2P11"/>
</dbReference>
<dbReference type="neXtProt" id="NX_Q13670"/>
<dbReference type="InParanoid" id="Q13670"/>
<dbReference type="PAN-GO" id="Q13670">
    <property type="GO annotations" value="3 GO annotations based on evolutionary models"/>
</dbReference>
<dbReference type="PhylomeDB" id="Q13670"/>
<dbReference type="PathwayCommons" id="Q13670"/>
<dbReference type="Pharos" id="Q13670">
    <property type="development level" value="Tdark"/>
</dbReference>
<dbReference type="PRO" id="PR:Q13670"/>
<dbReference type="Proteomes" id="UP000005640">
    <property type="component" value="Unplaced"/>
</dbReference>
<dbReference type="RNAct" id="Q13670">
    <property type="molecule type" value="protein"/>
</dbReference>
<dbReference type="GO" id="GO:0016301">
    <property type="term" value="F:kinase activity"/>
    <property type="evidence" value="ECO:0007669"/>
    <property type="project" value="UniProtKB-KW"/>
</dbReference>
<dbReference type="FunFam" id="3.30.565.10:FF:000299">
    <property type="entry name" value="Putative postmeiotic segregation increased 2-like protein 11"/>
    <property type="match status" value="1"/>
</dbReference>
<dbReference type="Gene3D" id="3.30.565.10">
    <property type="entry name" value="Histidine kinase-like ATPase, C-terminal domain"/>
    <property type="match status" value="1"/>
</dbReference>
<dbReference type="Gene3D" id="3.30.40.10">
    <property type="entry name" value="Zinc/RING finger domain, C3HC4 (zinc finger)"/>
    <property type="match status" value="1"/>
</dbReference>
<dbReference type="InterPro" id="IPR036890">
    <property type="entry name" value="HATPase_C_sf"/>
</dbReference>
<dbReference type="InterPro" id="IPR024831">
    <property type="entry name" value="Uroplakin-3"/>
</dbReference>
<dbReference type="InterPro" id="IPR013083">
    <property type="entry name" value="Znf_RING/FYVE/PHD"/>
</dbReference>
<dbReference type="PANTHER" id="PTHR15446">
    <property type="entry name" value="UROPLAKIN III"/>
    <property type="match status" value="1"/>
</dbReference>
<dbReference type="PANTHER" id="PTHR15446:SF15">
    <property type="entry name" value="UROPLAKIN-3B"/>
    <property type="match status" value="1"/>
</dbReference>
<dbReference type="Pfam" id="PF13589">
    <property type="entry name" value="HATPase_c_3"/>
    <property type="match status" value="1"/>
</dbReference>
<dbReference type="SUPFAM" id="SSF55874">
    <property type="entry name" value="ATPase domain of HSP90 chaperone/DNA topoisomerase II/histidine kinase"/>
    <property type="match status" value="1"/>
</dbReference>
<name>PM2PB_HUMAN</name>
<gene>
    <name type="primary">PMS2P11</name>
    <name type="synonym">PMS2L11</name>
    <name type="synonym">PMSR6</name>
</gene>
<reference key="1">
    <citation type="journal article" date="1995" name="Genomics">
        <title>Genomic organization of the human PMS2 gene family.</title>
        <authorList>
            <person name="Nicolaides N.C."/>
            <person name="Carter K.C."/>
            <person name="Shell B.K."/>
            <person name="Papadopoulos N."/>
            <person name="Vogelstein B."/>
            <person name="Kinzler K.W."/>
        </authorList>
    </citation>
    <scope>NUCLEOTIDE SEQUENCE [GENOMIC DNA]</scope>
    <source>
        <tissue>Small intestine</tissue>
    </source>
</reference>
<sequence>MEKLSAASGYSDVTDSKAMGPLAVGCLTKCSHAFHLLCLLAMYCNGNKGPEHPNPGKPFTARGFPASATFQTTPGPQASRGFQNPETLADIPASPQLLTDGHYMTLPVSPDQLPCDDPMAGSGGAPVLRVGHDHGCHQQPRICNAPLPGPGPYRTEPAKAIKPIDRKSVHQICSGPVVLSLSTAVKELVENSLDAGATNIDLKLKDYGMDLIEVSGNGCGVEEENFEGLMMSPFLPATSRRRLGLDWCLITMGKSSRRPPTPTPEGPQSA</sequence>
<accession>Q13670</accession>
<proteinExistence type="uncertain"/>
<protein>
    <recommendedName>
        <fullName>Putative postmeiotic segregation increased 2-like protein 11</fullName>
    </recommendedName>
    <alternativeName>
        <fullName>PMS2-related protein 6</fullName>
    </alternativeName>
    <alternativeName>
        <fullName>Putative postmeiotic segregation increased 2 pseudogene 11</fullName>
    </alternativeName>
</protein>
<organism>
    <name type="scientific">Homo sapiens</name>
    <name type="common">Human</name>
    <dbReference type="NCBI Taxonomy" id="9606"/>
    <lineage>
        <taxon>Eukaryota</taxon>
        <taxon>Metazoa</taxon>
        <taxon>Chordata</taxon>
        <taxon>Craniata</taxon>
        <taxon>Vertebrata</taxon>
        <taxon>Euteleostomi</taxon>
        <taxon>Mammalia</taxon>
        <taxon>Eutheria</taxon>
        <taxon>Euarchontoglires</taxon>
        <taxon>Primates</taxon>
        <taxon>Haplorrhini</taxon>
        <taxon>Catarrhini</taxon>
        <taxon>Hominidae</taxon>
        <taxon>Homo</taxon>
    </lineage>
</organism>